<feature type="chain" id="PRO_1000062768" description="Probable ECA polymerase">
    <location>
        <begin position="1"/>
        <end position="454"/>
    </location>
</feature>
<feature type="transmembrane region" description="Helical" evidence="1">
    <location>
        <begin position="3"/>
        <end position="23"/>
    </location>
</feature>
<feature type="transmembrane region" description="Helical" evidence="1">
    <location>
        <begin position="39"/>
        <end position="59"/>
    </location>
</feature>
<feature type="transmembrane region" description="Helical" evidence="1">
    <location>
        <begin position="61"/>
        <end position="81"/>
    </location>
</feature>
<feature type="transmembrane region" description="Helical" evidence="1">
    <location>
        <begin position="119"/>
        <end position="139"/>
    </location>
</feature>
<feature type="transmembrane region" description="Helical" evidence="1">
    <location>
        <begin position="154"/>
        <end position="174"/>
    </location>
</feature>
<feature type="transmembrane region" description="Helical" evidence="1">
    <location>
        <begin position="180"/>
        <end position="200"/>
    </location>
</feature>
<feature type="transmembrane region" description="Helical" evidence="1">
    <location>
        <begin position="201"/>
        <end position="221"/>
    </location>
</feature>
<feature type="transmembrane region" description="Helical" evidence="1">
    <location>
        <begin position="222"/>
        <end position="242"/>
    </location>
</feature>
<feature type="transmembrane region" description="Helical" evidence="1">
    <location>
        <begin position="340"/>
        <end position="360"/>
    </location>
</feature>
<feature type="transmembrane region" description="Helical" evidence="1">
    <location>
        <begin position="377"/>
        <end position="397"/>
    </location>
</feature>
<feature type="transmembrane region" description="Helical" evidence="1">
    <location>
        <begin position="409"/>
        <end position="429"/>
    </location>
</feature>
<keyword id="KW-0997">Cell inner membrane</keyword>
<keyword id="KW-1003">Cell membrane</keyword>
<keyword id="KW-0472">Membrane</keyword>
<keyword id="KW-0812">Transmembrane</keyword>
<keyword id="KW-1133">Transmembrane helix</keyword>
<reference key="1">
    <citation type="journal article" date="2006" name="J. Bacteriol.">
        <title>Complete genome sequence of Yersinia pestis strains Antiqua and Nepal516: evidence of gene reduction in an emerging pathogen.</title>
        <authorList>
            <person name="Chain P.S.G."/>
            <person name="Hu P."/>
            <person name="Malfatti S.A."/>
            <person name="Radnedge L."/>
            <person name="Larimer F."/>
            <person name="Vergez L.M."/>
            <person name="Worsham P."/>
            <person name="Chu M.C."/>
            <person name="Andersen G.L."/>
        </authorList>
    </citation>
    <scope>NUCLEOTIDE SEQUENCE [LARGE SCALE GENOMIC DNA]</scope>
    <source>
        <strain>Antiqua</strain>
    </source>
</reference>
<organism>
    <name type="scientific">Yersinia pestis bv. Antiqua (strain Antiqua)</name>
    <dbReference type="NCBI Taxonomy" id="360102"/>
    <lineage>
        <taxon>Bacteria</taxon>
        <taxon>Pseudomonadati</taxon>
        <taxon>Pseudomonadota</taxon>
        <taxon>Gammaproteobacteria</taxon>
        <taxon>Enterobacterales</taxon>
        <taxon>Yersiniaceae</taxon>
        <taxon>Yersinia</taxon>
    </lineage>
</organism>
<comment type="function">
    <text evidence="1">Probably involved in the polymerization of enterobacterial common antigen (ECA) trisaccharide repeat units.</text>
</comment>
<comment type="pathway">
    <text evidence="1">Bacterial outer membrane biogenesis; enterobacterial common antigen biosynthesis.</text>
</comment>
<comment type="subunit">
    <text evidence="1">Probably part of a complex composed of WzxE, WzyE and WzzE.</text>
</comment>
<comment type="subcellular location">
    <subcellularLocation>
        <location evidence="1">Cell inner membrane</location>
        <topology evidence="1">Multi-pass membrane protein</topology>
    </subcellularLocation>
</comment>
<comment type="similarity">
    <text evidence="1">Belongs to the WzyE family.</text>
</comment>
<accession>Q1CBP1</accession>
<name>WZYE_YERPA</name>
<proteinExistence type="inferred from homology"/>
<evidence type="ECO:0000255" key="1">
    <source>
        <dbReference type="HAMAP-Rule" id="MF_01003"/>
    </source>
</evidence>
<dbReference type="EMBL" id="CP000308">
    <property type="protein sequence ID" value="ABG12131.1"/>
    <property type="molecule type" value="Genomic_DNA"/>
</dbReference>
<dbReference type="RefSeq" id="WP_002211978.1">
    <property type="nucleotide sequence ID" value="NZ_CP009906.1"/>
</dbReference>
<dbReference type="GeneID" id="57974847"/>
<dbReference type="KEGG" id="ypa:YPA_0162"/>
<dbReference type="UniPathway" id="UPA00566"/>
<dbReference type="Proteomes" id="UP000001971">
    <property type="component" value="Chromosome"/>
</dbReference>
<dbReference type="GO" id="GO:0005886">
    <property type="term" value="C:plasma membrane"/>
    <property type="evidence" value="ECO:0007669"/>
    <property type="project" value="UniProtKB-SubCell"/>
</dbReference>
<dbReference type="GO" id="GO:0009246">
    <property type="term" value="P:enterobacterial common antigen biosynthetic process"/>
    <property type="evidence" value="ECO:0007669"/>
    <property type="project" value="UniProtKB-UniRule"/>
</dbReference>
<dbReference type="HAMAP" id="MF_01003">
    <property type="entry name" value="WzyE"/>
    <property type="match status" value="1"/>
</dbReference>
<dbReference type="InterPro" id="IPR010691">
    <property type="entry name" value="WzyE"/>
</dbReference>
<dbReference type="NCBIfam" id="NF002820">
    <property type="entry name" value="PRK02975.1"/>
    <property type="match status" value="1"/>
</dbReference>
<dbReference type="Pfam" id="PF06899">
    <property type="entry name" value="WzyE"/>
    <property type="match status" value="1"/>
</dbReference>
<gene>
    <name evidence="1" type="primary">wzyE</name>
    <name type="ordered locus">YPA_0162</name>
</gene>
<sequence>MTLGQFGGLFCIYLIAVIFILTLTYQEFRRVKFNFNVLFSMLYLLTFYFGFPLTCMLVFQFGVAVVPVEYLLYAMLSATAFYGIYYVTYKTRLRQPRSQPRTPIFTMNRVETNLTWVLLALVAVGTVGIFFMQNGFLLFKLDSYSKIFSSDVSGVALKRFFYFFIPAMLVVYFLKQDRRAWFFFLASTVAFGILTYVIVGGTRANIIIAFSLFLFIGIVRGWITLWMLAAAGVFGIVGMFWLALKRYGLDVNGAEAFYTFLYLTRDTFSPWENLGLLLQNYDKIDFQGLAPIVRDFYVFIPSALWPERPDLVLNTANYFTWDVLDNHSGLAISPTLIGSLVVMGGVLFIPLGAIVVGLIIKWFDWLYEQGKAESNRYKAAILQSFCFGAVFNIIVLAREGLDSFVSRVVFFCVIFGACLVLAKLLYWLFDTAGLIKRQGIKSNRLSTPNAGNQL</sequence>
<protein>
    <recommendedName>
        <fullName evidence="1">Probable ECA polymerase</fullName>
    </recommendedName>
</protein>